<comment type="function">
    <text evidence="5 6 7">Acts as an E3 ubiquitin-protein ligase which accepts ubiquitin specifically from endoplasmic reticulum-associated ubc-7 E2 ligase and transfers it to substrates, promoting their degradation. Component of the endoplasmic reticulum quality control (ERQC) system, which is also called the ER-associated degradation (ERAD) system, involved in ubiquitin-dependent degradation of misfolded endoplasmic reticulum proteins. Also promotes the degradation of normal but naturally short-lived proteins. Protects cells from ER stress-induced apoptosis. Thought to play a role together with hsp-3 in developmental growth and function of intestinal cells and to play a role together with hsp-4 in gonad formation (PubMed:17825049, PubMed:8293978). Plays a key role in the degradation of the potassium channel slo-1, perhaps acting directly, in targeting slo-1 to the ER-associated degradation pathway (ERAD), and also indirectly, via activation of the transcription factor skn-1, which mediates proteasomal homeostasis (PubMed:32502151).</text>
</comment>
<comment type="catalytic activity">
    <reaction>
        <text>S-ubiquitinyl-[E2 ubiquitin-conjugating enzyme]-L-cysteine + [acceptor protein]-L-lysine = [E2 ubiquitin-conjugating enzyme]-L-cysteine + N(6)-ubiquitinyl-[acceptor protein]-L-lysine.</text>
        <dbReference type="EC" id="2.3.2.27"/>
    </reaction>
</comment>
<comment type="pathway">
    <text>Protein modification; protein ubiquitination.</text>
</comment>
<comment type="subunit">
    <text evidence="1">Homodimer.</text>
</comment>
<comment type="subcellular location">
    <subcellularLocation>
        <location evidence="1">Endoplasmic reticulum membrane</location>
        <topology evidence="1">Multi-pass membrane protein</topology>
    </subcellularLocation>
</comment>
<comment type="domain">
    <text evidence="1">The RING-type zinc finger is required for E3 ligase activity.</text>
</comment>
<comment type="disruption phenotype">
    <text evidence="5">Reduced growth rate.</text>
</comment>
<comment type="similarity">
    <text evidence="8">Belongs to the HRD1 family.</text>
</comment>
<protein>
    <recommendedName>
        <fullName>E3 ubiquitin-protein ligase hrd-1</fullName>
        <ecNumber>2.3.2.27</ecNumber>
    </recommendedName>
    <alternativeName>
        <fullName evidence="8">RING-type E3 ubiquitin transferase hrd-1</fullName>
    </alternativeName>
    <alternativeName>
        <fullName>Suppressor/enhancer of lin-12</fullName>
    </alternativeName>
</protein>
<sequence length="610" mass="66814">MRVSAGLMIGGSCVATAATILNAFLINKQFYPSIVYLSKSNASMAVIYVQGIVLVYLMFQLLKSILFGDLRAAEAEHLSERTWHAVLETCLAFTVFRDDFSAIFVMQFIGLLFIKCFHWLADDRVDMMERSPVITLRFHLRMMTVLAALGFADSYFVSSAYFTTITRGASAQIVFGFEYAILLALVLHVTIKYLLHMHDLRNPQSWDNKAVYLLYAELFINLIRCLLYGFFAVVMLRVHTFPLFSVRPFYQSVRALHKAFLDVILSRRAINAMNSQFPVVSAEDLAAMDATCIICREEMTVDASPKRLPCSHVFHAHCLRSWFQRQQTCPTCRTDIWQGRNGAAAGGNAADAAANVADANVAGAQIGAGMPPFLPFLGHQFGFPQQPAGAGGAQPGAAQAGGQPGPFPHQIFYAPAPANRPEFMNLIPPPPLPMAGPPGMFPMMPPPPLPQVNTTQGTSSETPPVNPSYSQLSTEELRRMEGESREALLARLQAMDNIMVLLESAQMQMIQLATVTPIRPRPVVPSDESEQEAPGPSTDQVTSEEQEIPATSSAPSIFRTESPSTSSTAPSTSSPVTASSTPTTSSTRTPEAEEVRQRRLARLLGENANQ</sequence>
<gene>
    <name type="primary">sel-11</name>
    <name type="synonym">hrd-1</name>
    <name type="ORF">F55A11.3</name>
</gene>
<evidence type="ECO:0000250" key="1"/>
<evidence type="ECO:0000255" key="2"/>
<evidence type="ECO:0000255" key="3">
    <source>
        <dbReference type="PROSITE-ProRule" id="PRU00175"/>
    </source>
</evidence>
<evidence type="ECO:0000256" key="4">
    <source>
        <dbReference type="SAM" id="MobiDB-lite"/>
    </source>
</evidence>
<evidence type="ECO:0000269" key="5">
    <source>
    </source>
</evidence>
<evidence type="ECO:0000269" key="6">
    <source>
    </source>
</evidence>
<evidence type="ECO:0000269" key="7">
    <source>
    </source>
</evidence>
<evidence type="ECO:0000305" key="8"/>
<feature type="signal peptide" evidence="2">
    <location>
        <begin position="1"/>
        <end position="23"/>
    </location>
</feature>
<feature type="chain" id="PRO_0000280553" description="E3 ubiquitin-protein ligase hrd-1">
    <location>
        <begin position="24"/>
        <end position="610"/>
    </location>
</feature>
<feature type="topological domain" description="Lumenal" evidence="2">
    <location>
        <begin position="24"/>
        <end position="41"/>
    </location>
</feature>
<feature type="transmembrane region" description="Helical" evidence="2">
    <location>
        <begin position="42"/>
        <end position="62"/>
    </location>
</feature>
<feature type="topological domain" description="Cytoplasmic" evidence="2">
    <location>
        <begin position="63"/>
        <end position="99"/>
    </location>
</feature>
<feature type="transmembrane region" description="Helical" evidence="2">
    <location>
        <begin position="100"/>
        <end position="120"/>
    </location>
</feature>
<feature type="topological domain" description="Lumenal" evidence="2">
    <location>
        <begin position="121"/>
        <end position="144"/>
    </location>
</feature>
<feature type="transmembrane region" description="Helical" evidence="2">
    <location>
        <begin position="145"/>
        <end position="165"/>
    </location>
</feature>
<feature type="topological domain" description="Cytoplasmic" evidence="2">
    <location>
        <begin position="166"/>
        <end position="170"/>
    </location>
</feature>
<feature type="transmembrane region" description="Helical" evidence="2">
    <location>
        <begin position="171"/>
        <end position="191"/>
    </location>
</feature>
<feature type="topological domain" description="Lumenal" evidence="2">
    <location>
        <begin position="192"/>
        <end position="215"/>
    </location>
</feature>
<feature type="transmembrane region" description="Helical" evidence="2">
    <location>
        <begin position="216"/>
        <end position="236"/>
    </location>
</feature>
<feature type="topological domain" description="Cytoplasmic" evidence="2">
    <location>
        <begin position="237"/>
        <end position="610"/>
    </location>
</feature>
<feature type="zinc finger region" description="RING-type; atypical" evidence="3">
    <location>
        <begin position="292"/>
        <end position="333"/>
    </location>
</feature>
<feature type="region of interest" description="Disordered" evidence="4">
    <location>
        <begin position="386"/>
        <end position="408"/>
    </location>
</feature>
<feature type="region of interest" description="Disordered" evidence="4">
    <location>
        <begin position="452"/>
        <end position="480"/>
    </location>
</feature>
<feature type="region of interest" description="Disordered" evidence="4">
    <location>
        <begin position="521"/>
        <end position="610"/>
    </location>
</feature>
<feature type="compositionally biased region" description="Polar residues" evidence="4">
    <location>
        <begin position="452"/>
        <end position="474"/>
    </location>
</feature>
<feature type="compositionally biased region" description="Low complexity" evidence="4">
    <location>
        <begin position="560"/>
        <end position="589"/>
    </location>
</feature>
<feature type="mutagenesis site" description="In cim54; increases slo-1 levels and reduces the rate of thrashing in erg-28 and slo-1(gf) double background mutant." evidence="6">
    <original>P</original>
    <variation>S</variation>
    <location>
        <position position="371"/>
    </location>
</feature>
<organism>
    <name type="scientific">Caenorhabditis elegans</name>
    <dbReference type="NCBI Taxonomy" id="6239"/>
    <lineage>
        <taxon>Eukaryota</taxon>
        <taxon>Metazoa</taxon>
        <taxon>Ecdysozoa</taxon>
        <taxon>Nematoda</taxon>
        <taxon>Chromadorea</taxon>
        <taxon>Rhabditida</taxon>
        <taxon>Rhabditina</taxon>
        <taxon>Rhabditomorpha</taxon>
        <taxon>Rhabditoidea</taxon>
        <taxon>Rhabditidae</taxon>
        <taxon>Peloderinae</taxon>
        <taxon>Caenorhabditis</taxon>
    </lineage>
</organism>
<proteinExistence type="evidence at protein level"/>
<dbReference type="EC" id="2.3.2.27"/>
<dbReference type="EMBL" id="Z72511">
    <property type="protein sequence ID" value="CAA96657.1"/>
    <property type="molecule type" value="Genomic_DNA"/>
</dbReference>
<dbReference type="PIR" id="T22687">
    <property type="entry name" value="T22687"/>
</dbReference>
<dbReference type="RefSeq" id="NP_505969.1">
    <property type="nucleotide sequence ID" value="NM_073568.7"/>
</dbReference>
<dbReference type="SMR" id="Q20798"/>
<dbReference type="BioGRID" id="44637">
    <property type="interactions" value="9"/>
</dbReference>
<dbReference type="DIP" id="DIP-26690N"/>
<dbReference type="FunCoup" id="Q20798">
    <property type="interactions" value="2292"/>
</dbReference>
<dbReference type="IntAct" id="Q20798">
    <property type="interactions" value="4"/>
</dbReference>
<dbReference type="STRING" id="6239.F55A11.3.1"/>
<dbReference type="iPTMnet" id="Q20798"/>
<dbReference type="PaxDb" id="6239-F55A11.3"/>
<dbReference type="PeptideAtlas" id="Q20798"/>
<dbReference type="EnsemblMetazoa" id="F55A11.3.1">
    <property type="protein sequence ID" value="F55A11.3.1"/>
    <property type="gene ID" value="WBGene00004768"/>
</dbReference>
<dbReference type="GeneID" id="179612"/>
<dbReference type="KEGG" id="cel:CELE_F55A11.3"/>
<dbReference type="UCSC" id="F55A11.3">
    <property type="organism name" value="c. elegans"/>
</dbReference>
<dbReference type="AGR" id="WB:WBGene00004768"/>
<dbReference type="CTD" id="179612"/>
<dbReference type="WormBase" id="F55A11.3">
    <property type="protein sequence ID" value="CE05945"/>
    <property type="gene ID" value="WBGene00004768"/>
    <property type="gene designation" value="sel-11"/>
</dbReference>
<dbReference type="eggNOG" id="KOG0802">
    <property type="taxonomic scope" value="Eukaryota"/>
</dbReference>
<dbReference type="GeneTree" id="ENSGT00940000172216"/>
<dbReference type="HOGENOM" id="CLU_009169_3_1_1"/>
<dbReference type="InParanoid" id="Q20798"/>
<dbReference type="OMA" id="MQQYQGI"/>
<dbReference type="OrthoDB" id="7759664at2759"/>
<dbReference type="PhylomeDB" id="Q20798"/>
<dbReference type="Reactome" id="R-CEL-5358346">
    <property type="pathway name" value="Hedgehog ligand biogenesis"/>
</dbReference>
<dbReference type="SignaLink" id="Q20798"/>
<dbReference type="UniPathway" id="UPA00143"/>
<dbReference type="PRO" id="PR:Q20798"/>
<dbReference type="Proteomes" id="UP000001940">
    <property type="component" value="Chromosome V"/>
</dbReference>
<dbReference type="Bgee" id="WBGene00004768">
    <property type="expression patterns" value="Expressed in germ line (C elegans) and 4 other cell types or tissues"/>
</dbReference>
<dbReference type="GO" id="GO:0012505">
    <property type="term" value="C:endomembrane system"/>
    <property type="evidence" value="ECO:0000318"/>
    <property type="project" value="GO_Central"/>
</dbReference>
<dbReference type="GO" id="GO:0005789">
    <property type="term" value="C:endoplasmic reticulum membrane"/>
    <property type="evidence" value="ECO:0007669"/>
    <property type="project" value="UniProtKB-SubCell"/>
</dbReference>
<dbReference type="GO" id="GO:0044322">
    <property type="term" value="C:endoplasmic reticulum quality control compartment"/>
    <property type="evidence" value="ECO:0000318"/>
    <property type="project" value="GO_Central"/>
</dbReference>
<dbReference type="GO" id="GO:0061630">
    <property type="term" value="F:ubiquitin protein ligase activity"/>
    <property type="evidence" value="ECO:0000318"/>
    <property type="project" value="GO_Central"/>
</dbReference>
<dbReference type="GO" id="GO:0008270">
    <property type="term" value="F:zinc ion binding"/>
    <property type="evidence" value="ECO:0007669"/>
    <property type="project" value="UniProtKB-KW"/>
</dbReference>
<dbReference type="GO" id="GO:0036503">
    <property type="term" value="P:ERAD pathway"/>
    <property type="evidence" value="ECO:0000318"/>
    <property type="project" value="GO_Central"/>
</dbReference>
<dbReference type="GO" id="GO:0036498">
    <property type="term" value="P:IRE1-mediated unfolded protein response"/>
    <property type="evidence" value="ECO:0007007"/>
    <property type="project" value="WormBase"/>
</dbReference>
<dbReference type="GO" id="GO:0035264">
    <property type="term" value="P:multicellular organism growth"/>
    <property type="evidence" value="ECO:0000316"/>
    <property type="project" value="WormBase"/>
</dbReference>
<dbReference type="GO" id="GO:0043161">
    <property type="term" value="P:proteasome-mediated ubiquitin-dependent protein catabolic process"/>
    <property type="evidence" value="ECO:0000318"/>
    <property type="project" value="GO_Central"/>
</dbReference>
<dbReference type="GO" id="GO:0016567">
    <property type="term" value="P:protein ubiquitination"/>
    <property type="evidence" value="ECO:0007669"/>
    <property type="project" value="UniProtKB-UniPathway"/>
</dbReference>
<dbReference type="GO" id="GO:0010468">
    <property type="term" value="P:regulation of gene expression"/>
    <property type="evidence" value="ECO:0000315"/>
    <property type="project" value="WormBase"/>
</dbReference>
<dbReference type="GO" id="GO:0008593">
    <property type="term" value="P:regulation of Notch signaling pathway"/>
    <property type="evidence" value="ECO:0000316"/>
    <property type="project" value="WormBase"/>
</dbReference>
<dbReference type="CDD" id="cd16479">
    <property type="entry name" value="RING-H2_synoviolin"/>
    <property type="match status" value="1"/>
</dbReference>
<dbReference type="FunFam" id="3.30.40.10:FF:000088">
    <property type="entry name" value="E3 ubiquitin-protein ligase synoviolin"/>
    <property type="match status" value="1"/>
</dbReference>
<dbReference type="Gene3D" id="3.30.40.10">
    <property type="entry name" value="Zinc/RING finger domain, C3HC4 (zinc finger)"/>
    <property type="match status" value="1"/>
</dbReference>
<dbReference type="InterPro" id="IPR050731">
    <property type="entry name" value="HRD1_E3_ubiq-ligases"/>
</dbReference>
<dbReference type="InterPro" id="IPR001841">
    <property type="entry name" value="Znf_RING"/>
</dbReference>
<dbReference type="InterPro" id="IPR013083">
    <property type="entry name" value="Znf_RING/FYVE/PHD"/>
</dbReference>
<dbReference type="PANTHER" id="PTHR22763:SF184">
    <property type="entry name" value="E3 UBIQUITIN-PROTEIN LIGASE SYNOVIOLIN"/>
    <property type="match status" value="1"/>
</dbReference>
<dbReference type="PANTHER" id="PTHR22763">
    <property type="entry name" value="RING ZINC FINGER PROTEIN"/>
    <property type="match status" value="1"/>
</dbReference>
<dbReference type="Pfam" id="PF13639">
    <property type="entry name" value="zf-RING_2"/>
    <property type="match status" value="1"/>
</dbReference>
<dbReference type="SMART" id="SM00184">
    <property type="entry name" value="RING"/>
    <property type="match status" value="1"/>
</dbReference>
<dbReference type="SUPFAM" id="SSF57850">
    <property type="entry name" value="RING/U-box"/>
    <property type="match status" value="1"/>
</dbReference>
<dbReference type="PROSITE" id="PS50089">
    <property type="entry name" value="ZF_RING_2"/>
    <property type="match status" value="1"/>
</dbReference>
<accession>Q20798</accession>
<name>HRD1_CAEEL</name>
<reference key="1">
    <citation type="journal article" date="1998" name="Science">
        <title>Genome sequence of the nematode C. elegans: a platform for investigating biology.</title>
        <authorList>
            <consortium name="The C. elegans sequencing consortium"/>
        </authorList>
    </citation>
    <scope>NUCLEOTIDE SEQUENCE [LARGE SCALE GENOMIC DNA]</scope>
    <source>
        <strain>Bristol N2</strain>
    </source>
</reference>
<reference key="2">
    <citation type="journal article" date="1993" name="Genetics">
        <title>Suppressors of a lin-12 hypomorph define genes that interact with both lin-12 and glp-1 in Caenorhabditis elegans.</title>
        <authorList>
            <person name="Sundaram M."/>
            <person name="Greenwald I."/>
        </authorList>
    </citation>
    <scope>FUNCTION</scope>
</reference>
<reference key="3">
    <citation type="journal article" date="2007" name="Genes Cells">
        <title>ER E3 ubiquitin ligase HRD-1 and its specific partner chaperone BiP play important roles in ERAD and developmental growth in Caenorhabditis elegans.</title>
        <authorList>
            <person name="Sasagawa Y."/>
            <person name="Yamanaka K."/>
            <person name="Ogura T."/>
        </authorList>
    </citation>
    <scope>FUNCTION</scope>
    <scope>DISRUPTION PHENOTYPE</scope>
</reference>
<reference evidence="8" key="4">
    <citation type="journal article" date="2020" name="PLoS Genet.">
        <title>BK channel density is regulated by endoplasmic reticulum associated degradation and influenced by the SKN-1A/NRF1 transcription factor.</title>
        <authorList>
            <person name="Cheung T.P."/>
            <person name="Choe J.Y."/>
            <person name="Richmond J.E."/>
            <person name="Kim H."/>
        </authorList>
    </citation>
    <scope>FUNCTION</scope>
    <scope>MUTAGENESIS OF PRO-371</scope>
</reference>
<keyword id="KW-0256">Endoplasmic reticulum</keyword>
<keyword id="KW-0472">Membrane</keyword>
<keyword id="KW-0479">Metal-binding</keyword>
<keyword id="KW-1185">Reference proteome</keyword>
<keyword id="KW-0732">Signal</keyword>
<keyword id="KW-0808">Transferase</keyword>
<keyword id="KW-0812">Transmembrane</keyword>
<keyword id="KW-1133">Transmembrane helix</keyword>
<keyword id="KW-0833">Ubl conjugation pathway</keyword>
<keyword id="KW-0862">Zinc</keyword>
<keyword id="KW-0863">Zinc-finger</keyword>